<keyword id="KW-1185">Reference proteome</keyword>
<keyword id="KW-0687">Ribonucleoprotein</keyword>
<keyword id="KW-0689">Ribosomal protein</keyword>
<accession>A5CVW8</accession>
<gene>
    <name evidence="1" type="primary">rplS</name>
    <name type="ordered locus">COSY_0797</name>
</gene>
<sequence>MNLIDQIENEQLRSDLPLFVSGDTIIVQVKVREGERERLQAFEGVVIAKKNRGIGSAFTVRKISHGEGVERVFQTHSKMIDSIKVKRRGKVHQAKLYYLRGLTGKKARIKEKLQIRK</sequence>
<protein>
    <recommendedName>
        <fullName evidence="1">Large ribosomal subunit protein bL19</fullName>
    </recommendedName>
    <alternativeName>
        <fullName evidence="2">50S ribosomal protein L19</fullName>
    </alternativeName>
</protein>
<dbReference type="EMBL" id="AP009247">
    <property type="protein sequence ID" value="BAF61903.1"/>
    <property type="molecule type" value="Genomic_DNA"/>
</dbReference>
<dbReference type="RefSeq" id="WP_011930172.1">
    <property type="nucleotide sequence ID" value="NC_009465.1"/>
</dbReference>
<dbReference type="SMR" id="A5CVW8"/>
<dbReference type="STRING" id="412965.COSY_0797"/>
<dbReference type="KEGG" id="vok:COSY_0797"/>
<dbReference type="eggNOG" id="COG0335">
    <property type="taxonomic scope" value="Bacteria"/>
</dbReference>
<dbReference type="HOGENOM" id="CLU_103507_2_1_6"/>
<dbReference type="OrthoDB" id="9803541at2"/>
<dbReference type="Proteomes" id="UP000000247">
    <property type="component" value="Chromosome"/>
</dbReference>
<dbReference type="GO" id="GO:0022625">
    <property type="term" value="C:cytosolic large ribosomal subunit"/>
    <property type="evidence" value="ECO:0007669"/>
    <property type="project" value="TreeGrafter"/>
</dbReference>
<dbReference type="GO" id="GO:0003735">
    <property type="term" value="F:structural constituent of ribosome"/>
    <property type="evidence" value="ECO:0007669"/>
    <property type="project" value="InterPro"/>
</dbReference>
<dbReference type="GO" id="GO:0006412">
    <property type="term" value="P:translation"/>
    <property type="evidence" value="ECO:0007669"/>
    <property type="project" value="UniProtKB-UniRule"/>
</dbReference>
<dbReference type="FunFam" id="2.30.30.790:FF:000001">
    <property type="entry name" value="50S ribosomal protein L19"/>
    <property type="match status" value="1"/>
</dbReference>
<dbReference type="Gene3D" id="2.30.30.790">
    <property type="match status" value="1"/>
</dbReference>
<dbReference type="HAMAP" id="MF_00402">
    <property type="entry name" value="Ribosomal_bL19"/>
    <property type="match status" value="1"/>
</dbReference>
<dbReference type="InterPro" id="IPR001857">
    <property type="entry name" value="Ribosomal_bL19"/>
</dbReference>
<dbReference type="InterPro" id="IPR038657">
    <property type="entry name" value="Ribosomal_bL19_sf"/>
</dbReference>
<dbReference type="InterPro" id="IPR008991">
    <property type="entry name" value="Translation_prot_SH3-like_sf"/>
</dbReference>
<dbReference type="NCBIfam" id="TIGR01024">
    <property type="entry name" value="rplS_bact"/>
    <property type="match status" value="1"/>
</dbReference>
<dbReference type="PANTHER" id="PTHR15680:SF9">
    <property type="entry name" value="LARGE RIBOSOMAL SUBUNIT PROTEIN BL19M"/>
    <property type="match status" value="1"/>
</dbReference>
<dbReference type="PANTHER" id="PTHR15680">
    <property type="entry name" value="RIBOSOMAL PROTEIN L19"/>
    <property type="match status" value="1"/>
</dbReference>
<dbReference type="Pfam" id="PF01245">
    <property type="entry name" value="Ribosomal_L19"/>
    <property type="match status" value="1"/>
</dbReference>
<dbReference type="PIRSF" id="PIRSF002191">
    <property type="entry name" value="Ribosomal_L19"/>
    <property type="match status" value="1"/>
</dbReference>
<dbReference type="PRINTS" id="PR00061">
    <property type="entry name" value="RIBOSOMALL19"/>
</dbReference>
<dbReference type="SUPFAM" id="SSF50104">
    <property type="entry name" value="Translation proteins SH3-like domain"/>
    <property type="match status" value="1"/>
</dbReference>
<organism>
    <name type="scientific">Vesicomyosocius okutanii subsp. Calyptogena okutanii (strain HA)</name>
    <dbReference type="NCBI Taxonomy" id="412965"/>
    <lineage>
        <taxon>Bacteria</taxon>
        <taxon>Pseudomonadati</taxon>
        <taxon>Pseudomonadota</taxon>
        <taxon>Gammaproteobacteria</taxon>
        <taxon>Candidatus Pseudothioglobaceae</taxon>
        <taxon>Candidatus Vesicomyosocius</taxon>
    </lineage>
</organism>
<feature type="chain" id="PRO_0000340748" description="Large ribosomal subunit protein bL19">
    <location>
        <begin position="1"/>
        <end position="117"/>
    </location>
</feature>
<name>RL19_VESOH</name>
<evidence type="ECO:0000255" key="1">
    <source>
        <dbReference type="HAMAP-Rule" id="MF_00402"/>
    </source>
</evidence>
<evidence type="ECO:0000305" key="2"/>
<reference key="1">
    <citation type="journal article" date="2007" name="Curr. Biol.">
        <title>Reduced genome of the thioautotrophic intracellular symbiont in a deep-sea clam, Calyptogena okutanii.</title>
        <authorList>
            <person name="Kuwahara H."/>
            <person name="Yoshida T."/>
            <person name="Takaki Y."/>
            <person name="Shimamura S."/>
            <person name="Nishi S."/>
            <person name="Harada M."/>
            <person name="Matsuyama K."/>
            <person name="Takishita K."/>
            <person name="Kawato M."/>
            <person name="Uematsu K."/>
            <person name="Fujiwara Y."/>
            <person name="Sato T."/>
            <person name="Kato C."/>
            <person name="Kitagawa M."/>
            <person name="Kato I."/>
            <person name="Maruyama T."/>
        </authorList>
    </citation>
    <scope>NUCLEOTIDE SEQUENCE [LARGE SCALE GENOMIC DNA]</scope>
    <source>
        <strain>HA</strain>
    </source>
</reference>
<comment type="function">
    <text evidence="1">This protein is located at the 30S-50S ribosomal subunit interface and may play a role in the structure and function of the aminoacyl-tRNA binding site.</text>
</comment>
<comment type="similarity">
    <text evidence="1">Belongs to the bacterial ribosomal protein bL19 family.</text>
</comment>
<proteinExistence type="inferred from homology"/>